<protein>
    <recommendedName>
        <fullName>Movement protein P1</fullName>
    </recommendedName>
    <alternativeName>
        <fullName>Cell-to-cell transport protein</fullName>
    </alternativeName>
</protein>
<sequence>MSYRFLTVRAFGFTGFHCDATRLLSETEVIDVPSSLDFVGETELRLETAWPQCEENCYTILPRFNVQVDFEYYPVRVEIVCRVCAASLSVIFSKWDFYCSRRGHFVPVDQNGDLFRIGTLQETGEKYFYFCDKSICRQCIIQAAHHHS</sequence>
<organismHost>
    <name type="scientific">Glycine max</name>
    <name type="common">Soybean</name>
    <name type="synonym">Glycine hispida</name>
    <dbReference type="NCBI Taxonomy" id="3847"/>
</organismHost>
<organismHost>
    <name type="scientific">Phaseolus vulgaris</name>
    <name type="common">Kidney bean</name>
    <name type="synonym">French bean</name>
    <dbReference type="NCBI Taxonomy" id="3885"/>
</organismHost>
<organismHost>
    <name type="scientific">Vigna mungo</name>
    <name type="common">Black gram</name>
    <name type="synonym">Phaseolus mungo</name>
    <dbReference type="NCBI Taxonomy" id="3915"/>
</organismHost>
<organismHost>
    <name type="scientific">Vigna unguiculata</name>
    <name type="common">Cowpea</name>
    <dbReference type="NCBI Taxonomy" id="3917"/>
</organismHost>
<name>MVP_SBMVA</name>
<evidence type="ECO:0000250" key="1"/>
<evidence type="ECO:0000305" key="2"/>
<dbReference type="EMBL" id="AF055887">
    <property type="protein sequence ID" value="AAC15982.1"/>
    <property type="molecule type" value="Genomic_RNA"/>
</dbReference>
<dbReference type="EMBL" id="AF055888">
    <property type="protein sequence ID" value="AAC15986.1"/>
    <property type="molecule type" value="Genomic_RNA"/>
</dbReference>
<dbReference type="Proteomes" id="UP000001671">
    <property type="component" value="Segment"/>
</dbReference>
<dbReference type="GO" id="GO:0052170">
    <property type="term" value="P:symbiont-mediated suppression of host innate immune response"/>
    <property type="evidence" value="ECO:0007669"/>
    <property type="project" value="UniProtKB-KW"/>
</dbReference>
<dbReference type="GO" id="GO:0046740">
    <property type="term" value="P:transport of virus in host, cell to cell"/>
    <property type="evidence" value="ECO:0007669"/>
    <property type="project" value="UniProtKB-KW"/>
</dbReference>
<accession>O73571</accession>
<feature type="chain" id="PRO_0000402468" description="Movement protein P1">
    <location>
        <begin position="1"/>
        <end position="148"/>
    </location>
</feature>
<comment type="function">
    <text evidence="1 2">Transports viral genome to neighboring plant cells directly through plasmosdesmata, without any budding. The movement protein allows efficient cell to cell propagation, by bypassing the host cell wall barrier (Potential). Likely acts as a suppressor of RNA-mediated gene silencing, also known as post-transcriptional gene silencing (PTGS), a mechanism of plant viral defense that performs sequence-specific inhibition of viral mRNAs expression (By similarity).</text>
</comment>
<proteinExistence type="inferred from homology"/>
<organism>
    <name type="scientific">Southern bean mosaic virus (isolate Bean/United States/Arkansas)</name>
    <name type="common">SBMV</name>
    <dbReference type="NCBI Taxonomy" id="652938"/>
    <lineage>
        <taxon>Viruses</taxon>
        <taxon>Riboviria</taxon>
        <taxon>Orthornavirae</taxon>
        <taxon>Pisuviricota</taxon>
        <taxon>Pisoniviricetes</taxon>
        <taxon>Sobelivirales</taxon>
        <taxon>Solemoviridae</taxon>
        <taxon>Sobemovirus</taxon>
        <taxon>Southern bean mosaic virus</taxon>
    </lineage>
</organism>
<keyword id="KW-0945">Host-virus interaction</keyword>
<keyword id="KW-1090">Inhibition of host innate immune response by virus</keyword>
<keyword id="KW-1185">Reference proteome</keyword>
<keyword id="KW-0941">Suppressor of RNA silencing</keyword>
<keyword id="KW-0813">Transport</keyword>
<keyword id="KW-0899">Viral immunoevasion</keyword>
<keyword id="KW-0916">Viral movement protein</keyword>
<gene>
    <name type="ORF">ORF1</name>
</gene>
<reference key="1">
    <citation type="journal article" date="1998" name="Arch. Virol.">
        <title>Nucleotide sequence of a resistance breaking mutant of southern bean mosaic virus.</title>
        <authorList>
            <person name="Lee L."/>
            <person name="Anderson E.J."/>
        </authorList>
    </citation>
    <scope>NUCLEOTIDE SEQUENCE [GENOMIC RNA]</scope>
    <source>
        <strain>SBMV-B</strain>
        <strain>SBMV-S</strain>
    </source>
</reference>